<comment type="function">
    <text evidence="1">Probable carboxypeptidase.</text>
</comment>
<comment type="subcellular location">
    <subcellularLocation>
        <location evidence="4">Secreted</location>
    </subcellularLocation>
</comment>
<comment type="tissue specificity">
    <text evidence="3">Ubiquitous.</text>
</comment>
<comment type="similarity">
    <text evidence="4">Belongs to the peptidase S10 family.</text>
</comment>
<comment type="sequence caution" evidence="4">
    <conflict type="erroneous initiation">
        <sequence resource="EMBL-CDS" id="AAM65698"/>
    </conflict>
</comment>
<dbReference type="EC" id="3.4.16.-"/>
<dbReference type="EMBL" id="AC011664">
    <property type="protein sequence ID" value="AAF14826.1"/>
    <property type="molecule type" value="Genomic_DNA"/>
</dbReference>
<dbReference type="EMBL" id="CP002686">
    <property type="protein sequence ID" value="AEE73764.1"/>
    <property type="molecule type" value="Genomic_DNA"/>
</dbReference>
<dbReference type="EMBL" id="AY037210">
    <property type="protein sequence ID" value="AAK59795.1"/>
    <property type="molecule type" value="mRNA"/>
</dbReference>
<dbReference type="EMBL" id="BT002657">
    <property type="protein sequence ID" value="AAO11573.1"/>
    <property type="molecule type" value="mRNA"/>
</dbReference>
<dbReference type="EMBL" id="AY088154">
    <property type="protein sequence ID" value="AAM65698.1"/>
    <property type="status" value="ALT_INIT"/>
    <property type="molecule type" value="mRNA"/>
</dbReference>
<dbReference type="RefSeq" id="NP_186860.1">
    <property type="nucleotide sequence ID" value="NM_111077.4"/>
</dbReference>
<dbReference type="SMR" id="Q8L9Y0"/>
<dbReference type="FunCoup" id="Q8L9Y0">
    <property type="interactions" value="13"/>
</dbReference>
<dbReference type="STRING" id="3702.Q8L9Y0"/>
<dbReference type="ESTHER" id="arath-SCP25">
    <property type="family name" value="Carboxypeptidase_S10"/>
</dbReference>
<dbReference type="MEROPS" id="S10.A40"/>
<dbReference type="GlyCosmos" id="Q8L9Y0">
    <property type="glycosylation" value="6 sites, No reported glycans"/>
</dbReference>
<dbReference type="GlyGen" id="Q8L9Y0">
    <property type="glycosylation" value="6 sites"/>
</dbReference>
<dbReference type="PaxDb" id="3702-AT3G02110.1"/>
<dbReference type="ProteomicsDB" id="232919"/>
<dbReference type="EnsemblPlants" id="AT3G02110.1">
    <property type="protein sequence ID" value="AT3G02110.1"/>
    <property type="gene ID" value="AT3G02110"/>
</dbReference>
<dbReference type="GeneID" id="821207"/>
<dbReference type="Gramene" id="AT3G02110.1">
    <property type="protein sequence ID" value="AT3G02110.1"/>
    <property type="gene ID" value="AT3G02110"/>
</dbReference>
<dbReference type="KEGG" id="ath:AT3G02110"/>
<dbReference type="Araport" id="AT3G02110"/>
<dbReference type="TAIR" id="AT3G02110">
    <property type="gene designation" value="SCPL25"/>
</dbReference>
<dbReference type="eggNOG" id="KOG1282">
    <property type="taxonomic scope" value="Eukaryota"/>
</dbReference>
<dbReference type="HOGENOM" id="CLU_008523_13_0_1"/>
<dbReference type="InParanoid" id="Q8L9Y0"/>
<dbReference type="OMA" id="LMSTCDF"/>
<dbReference type="OrthoDB" id="443318at2759"/>
<dbReference type="PhylomeDB" id="Q8L9Y0"/>
<dbReference type="PRO" id="PR:Q8L9Y0"/>
<dbReference type="Proteomes" id="UP000006548">
    <property type="component" value="Chromosome 3"/>
</dbReference>
<dbReference type="ExpressionAtlas" id="Q8L9Y0">
    <property type="expression patterns" value="baseline and differential"/>
</dbReference>
<dbReference type="GO" id="GO:0005576">
    <property type="term" value="C:extracellular region"/>
    <property type="evidence" value="ECO:0007669"/>
    <property type="project" value="UniProtKB-SubCell"/>
</dbReference>
<dbReference type="GO" id="GO:0004185">
    <property type="term" value="F:serine-type carboxypeptidase activity"/>
    <property type="evidence" value="ECO:0007669"/>
    <property type="project" value="InterPro"/>
</dbReference>
<dbReference type="GO" id="GO:0006508">
    <property type="term" value="P:proteolysis"/>
    <property type="evidence" value="ECO:0007669"/>
    <property type="project" value="UniProtKB-KW"/>
</dbReference>
<dbReference type="FunFam" id="3.40.50.11320:FF:000002">
    <property type="entry name" value="Carboxypeptidase"/>
    <property type="match status" value="1"/>
</dbReference>
<dbReference type="FunFam" id="3.40.50.1820:FF:000013">
    <property type="entry name" value="Carboxypeptidase"/>
    <property type="match status" value="1"/>
</dbReference>
<dbReference type="Gene3D" id="3.40.50.11320">
    <property type="match status" value="1"/>
</dbReference>
<dbReference type="Gene3D" id="6.10.250.940">
    <property type="match status" value="1"/>
</dbReference>
<dbReference type="Gene3D" id="3.40.50.1820">
    <property type="entry name" value="alpha/beta hydrolase"/>
    <property type="match status" value="1"/>
</dbReference>
<dbReference type="InterPro" id="IPR029058">
    <property type="entry name" value="AB_hydrolase_fold"/>
</dbReference>
<dbReference type="InterPro" id="IPR001563">
    <property type="entry name" value="Peptidase_S10"/>
</dbReference>
<dbReference type="InterPro" id="IPR033124">
    <property type="entry name" value="Ser_caboxypep_his_AS"/>
</dbReference>
<dbReference type="InterPro" id="IPR018202">
    <property type="entry name" value="Ser_caboxypep_ser_AS"/>
</dbReference>
<dbReference type="PANTHER" id="PTHR11802:SF87">
    <property type="entry name" value="SERINE CARBOXYPEPTIDASE-LIKE 25"/>
    <property type="match status" value="1"/>
</dbReference>
<dbReference type="PANTHER" id="PTHR11802">
    <property type="entry name" value="SERINE PROTEASE FAMILY S10 SERINE CARBOXYPEPTIDASE"/>
    <property type="match status" value="1"/>
</dbReference>
<dbReference type="Pfam" id="PF00450">
    <property type="entry name" value="Peptidase_S10"/>
    <property type="match status" value="1"/>
</dbReference>
<dbReference type="PRINTS" id="PR00724">
    <property type="entry name" value="CRBOXYPTASEC"/>
</dbReference>
<dbReference type="SUPFAM" id="SSF53474">
    <property type="entry name" value="alpha/beta-Hydrolases"/>
    <property type="match status" value="1"/>
</dbReference>
<dbReference type="PROSITE" id="PS00560">
    <property type="entry name" value="CARBOXYPEPT_SER_HIS"/>
    <property type="match status" value="1"/>
</dbReference>
<dbReference type="PROSITE" id="PS00131">
    <property type="entry name" value="CARBOXYPEPT_SER_SER"/>
    <property type="match status" value="1"/>
</dbReference>
<protein>
    <recommendedName>
        <fullName>Serine carboxypeptidase-like 25</fullName>
        <ecNumber>3.4.16.-</ecNumber>
    </recommendedName>
</protein>
<name>SCP25_ARATH</name>
<evidence type="ECO:0000250" key="1"/>
<evidence type="ECO:0000255" key="2"/>
<evidence type="ECO:0000269" key="3">
    <source>
    </source>
</evidence>
<evidence type="ECO:0000305" key="4"/>
<reference key="1">
    <citation type="journal article" date="2000" name="Nature">
        <title>Sequence and analysis of chromosome 3 of the plant Arabidopsis thaliana.</title>
        <authorList>
            <person name="Salanoubat M."/>
            <person name="Lemcke K."/>
            <person name="Rieger M."/>
            <person name="Ansorge W."/>
            <person name="Unseld M."/>
            <person name="Fartmann B."/>
            <person name="Valle G."/>
            <person name="Bloecker H."/>
            <person name="Perez-Alonso M."/>
            <person name="Obermaier B."/>
            <person name="Delseny M."/>
            <person name="Boutry M."/>
            <person name="Grivell L.A."/>
            <person name="Mache R."/>
            <person name="Puigdomenech P."/>
            <person name="De Simone V."/>
            <person name="Choisne N."/>
            <person name="Artiguenave F."/>
            <person name="Robert C."/>
            <person name="Brottier P."/>
            <person name="Wincker P."/>
            <person name="Cattolico L."/>
            <person name="Weissenbach J."/>
            <person name="Saurin W."/>
            <person name="Quetier F."/>
            <person name="Schaefer M."/>
            <person name="Mueller-Auer S."/>
            <person name="Gabel C."/>
            <person name="Fuchs M."/>
            <person name="Benes V."/>
            <person name="Wurmbach E."/>
            <person name="Drzonek H."/>
            <person name="Erfle H."/>
            <person name="Jordan N."/>
            <person name="Bangert S."/>
            <person name="Wiedelmann R."/>
            <person name="Kranz H."/>
            <person name="Voss H."/>
            <person name="Holland R."/>
            <person name="Brandt P."/>
            <person name="Nyakatura G."/>
            <person name="Vezzi A."/>
            <person name="D'Angelo M."/>
            <person name="Pallavicini A."/>
            <person name="Toppo S."/>
            <person name="Simionati B."/>
            <person name="Conrad A."/>
            <person name="Hornischer K."/>
            <person name="Kauer G."/>
            <person name="Loehnert T.-H."/>
            <person name="Nordsiek G."/>
            <person name="Reichelt J."/>
            <person name="Scharfe M."/>
            <person name="Schoen O."/>
            <person name="Bargues M."/>
            <person name="Terol J."/>
            <person name="Climent J."/>
            <person name="Navarro P."/>
            <person name="Collado C."/>
            <person name="Perez-Perez A."/>
            <person name="Ottenwaelder B."/>
            <person name="Duchemin D."/>
            <person name="Cooke R."/>
            <person name="Laudie M."/>
            <person name="Berger-Llauro C."/>
            <person name="Purnelle B."/>
            <person name="Masuy D."/>
            <person name="de Haan M."/>
            <person name="Maarse A.C."/>
            <person name="Alcaraz J.-P."/>
            <person name="Cottet A."/>
            <person name="Casacuberta E."/>
            <person name="Monfort A."/>
            <person name="Argiriou A."/>
            <person name="Flores M."/>
            <person name="Liguori R."/>
            <person name="Vitale D."/>
            <person name="Mannhaupt G."/>
            <person name="Haase D."/>
            <person name="Schoof H."/>
            <person name="Rudd S."/>
            <person name="Zaccaria P."/>
            <person name="Mewes H.-W."/>
            <person name="Mayer K.F.X."/>
            <person name="Kaul S."/>
            <person name="Town C.D."/>
            <person name="Koo H.L."/>
            <person name="Tallon L.J."/>
            <person name="Jenkins J."/>
            <person name="Rooney T."/>
            <person name="Rizzo M."/>
            <person name="Walts A."/>
            <person name="Utterback T."/>
            <person name="Fujii C.Y."/>
            <person name="Shea T.P."/>
            <person name="Creasy T.H."/>
            <person name="Haas B."/>
            <person name="Maiti R."/>
            <person name="Wu D."/>
            <person name="Peterson J."/>
            <person name="Van Aken S."/>
            <person name="Pai G."/>
            <person name="Militscher J."/>
            <person name="Sellers P."/>
            <person name="Gill J.E."/>
            <person name="Feldblyum T.V."/>
            <person name="Preuss D."/>
            <person name="Lin X."/>
            <person name="Nierman W.C."/>
            <person name="Salzberg S.L."/>
            <person name="White O."/>
            <person name="Venter J.C."/>
            <person name="Fraser C.M."/>
            <person name="Kaneko T."/>
            <person name="Nakamura Y."/>
            <person name="Sato S."/>
            <person name="Kato T."/>
            <person name="Asamizu E."/>
            <person name="Sasamoto S."/>
            <person name="Kimura T."/>
            <person name="Idesawa K."/>
            <person name="Kawashima K."/>
            <person name="Kishida Y."/>
            <person name="Kiyokawa C."/>
            <person name="Kohara M."/>
            <person name="Matsumoto M."/>
            <person name="Matsuno A."/>
            <person name="Muraki A."/>
            <person name="Nakayama S."/>
            <person name="Nakazaki N."/>
            <person name="Shinpo S."/>
            <person name="Takeuchi C."/>
            <person name="Wada T."/>
            <person name="Watanabe A."/>
            <person name="Yamada M."/>
            <person name="Yasuda M."/>
            <person name="Tabata S."/>
        </authorList>
    </citation>
    <scope>NUCLEOTIDE SEQUENCE [LARGE SCALE GENOMIC DNA]</scope>
    <source>
        <strain>cv. Columbia</strain>
    </source>
</reference>
<reference key="2">
    <citation type="journal article" date="2017" name="Plant J.">
        <title>Araport11: a complete reannotation of the Arabidopsis thaliana reference genome.</title>
        <authorList>
            <person name="Cheng C.Y."/>
            <person name="Krishnakumar V."/>
            <person name="Chan A.P."/>
            <person name="Thibaud-Nissen F."/>
            <person name="Schobel S."/>
            <person name="Town C.D."/>
        </authorList>
    </citation>
    <scope>GENOME REANNOTATION</scope>
    <source>
        <strain>cv. Columbia</strain>
    </source>
</reference>
<reference key="3">
    <citation type="journal article" date="2003" name="Science">
        <title>Empirical analysis of transcriptional activity in the Arabidopsis genome.</title>
        <authorList>
            <person name="Yamada K."/>
            <person name="Lim J."/>
            <person name="Dale J.M."/>
            <person name="Chen H."/>
            <person name="Shinn P."/>
            <person name="Palm C.J."/>
            <person name="Southwick A.M."/>
            <person name="Wu H.C."/>
            <person name="Kim C.J."/>
            <person name="Nguyen M."/>
            <person name="Pham P.K."/>
            <person name="Cheuk R.F."/>
            <person name="Karlin-Newmann G."/>
            <person name="Liu S.X."/>
            <person name="Lam B."/>
            <person name="Sakano H."/>
            <person name="Wu T."/>
            <person name="Yu G."/>
            <person name="Miranda M."/>
            <person name="Quach H.L."/>
            <person name="Tripp M."/>
            <person name="Chang C.H."/>
            <person name="Lee J.M."/>
            <person name="Toriumi M.J."/>
            <person name="Chan M.M."/>
            <person name="Tang C.C."/>
            <person name="Onodera C.S."/>
            <person name="Deng J.M."/>
            <person name="Akiyama K."/>
            <person name="Ansari Y."/>
            <person name="Arakawa T."/>
            <person name="Banh J."/>
            <person name="Banno F."/>
            <person name="Bowser L."/>
            <person name="Brooks S.Y."/>
            <person name="Carninci P."/>
            <person name="Chao Q."/>
            <person name="Choy N."/>
            <person name="Enju A."/>
            <person name="Goldsmith A.D."/>
            <person name="Gurjal M."/>
            <person name="Hansen N.F."/>
            <person name="Hayashizaki Y."/>
            <person name="Johnson-Hopson C."/>
            <person name="Hsuan V.W."/>
            <person name="Iida K."/>
            <person name="Karnes M."/>
            <person name="Khan S."/>
            <person name="Koesema E."/>
            <person name="Ishida J."/>
            <person name="Jiang P.X."/>
            <person name="Jones T."/>
            <person name="Kawai J."/>
            <person name="Kamiya A."/>
            <person name="Meyers C."/>
            <person name="Nakajima M."/>
            <person name="Narusaka M."/>
            <person name="Seki M."/>
            <person name="Sakurai T."/>
            <person name="Satou M."/>
            <person name="Tamse R."/>
            <person name="Vaysberg M."/>
            <person name="Wallender E.K."/>
            <person name="Wong C."/>
            <person name="Yamamura Y."/>
            <person name="Yuan S."/>
            <person name="Shinozaki K."/>
            <person name="Davis R.W."/>
            <person name="Theologis A."/>
            <person name="Ecker J.R."/>
        </authorList>
    </citation>
    <scope>NUCLEOTIDE SEQUENCE [LARGE SCALE MRNA]</scope>
    <source>
        <strain>cv. Columbia</strain>
    </source>
</reference>
<reference key="4">
    <citation type="submission" date="2002-03" db="EMBL/GenBank/DDBJ databases">
        <title>Full-length cDNA from Arabidopsis thaliana.</title>
        <authorList>
            <person name="Brover V.V."/>
            <person name="Troukhan M.E."/>
            <person name="Alexandrov N.A."/>
            <person name="Lu Y.-P."/>
            <person name="Flavell R.B."/>
            <person name="Feldmann K.A."/>
        </authorList>
    </citation>
    <scope>NUCLEOTIDE SEQUENCE [LARGE SCALE MRNA]</scope>
</reference>
<reference key="5">
    <citation type="journal article" date="2005" name="Plant Physiol.">
        <title>An expression and bioinformatics analysis of the Arabidopsis serine carboxypeptidase-like gene family.</title>
        <authorList>
            <person name="Fraser C.M."/>
            <person name="Rider L.W."/>
            <person name="Chapple C."/>
        </authorList>
    </citation>
    <scope>GENE FAMILY</scope>
    <scope>TISSUE SPECIFICITY</scope>
    <scope>NOMENCLATURE</scope>
</reference>
<feature type="signal peptide" evidence="2">
    <location>
        <begin position="1"/>
        <end position="22"/>
    </location>
</feature>
<feature type="chain" id="PRO_0000274640" description="Serine carboxypeptidase-like 25">
    <location>
        <begin position="23"/>
        <end position="473"/>
    </location>
</feature>
<feature type="active site" evidence="1">
    <location>
        <position position="185"/>
    </location>
</feature>
<feature type="active site" evidence="1">
    <location>
        <position position="395"/>
    </location>
</feature>
<feature type="active site" evidence="1">
    <location>
        <position position="447"/>
    </location>
</feature>
<feature type="glycosylation site" description="N-linked (GlcNAc...) asparagine" evidence="2">
    <location>
        <position position="46"/>
    </location>
</feature>
<feature type="glycosylation site" description="N-linked (GlcNAc...) asparagine" evidence="2">
    <location>
        <position position="143"/>
    </location>
</feature>
<feature type="glycosylation site" description="N-linked (GlcNAc...) asparagine" evidence="2">
    <location>
        <position position="289"/>
    </location>
</feature>
<feature type="glycosylation site" description="N-linked (GlcNAc...) asparagine" evidence="2">
    <location>
        <position position="299"/>
    </location>
</feature>
<feature type="glycosylation site" description="N-linked (GlcNAc...) asparagine" evidence="2">
    <location>
        <position position="347"/>
    </location>
</feature>
<feature type="glycosylation site" description="N-linked (GlcNAc...) asparagine" evidence="2">
    <location>
        <position position="367"/>
    </location>
</feature>
<feature type="disulfide bond" evidence="1">
    <location>
        <begin position="92"/>
        <end position="358"/>
    </location>
</feature>
<feature type="disulfide bond" evidence="1">
    <location>
        <begin position="252"/>
        <end position="263"/>
    </location>
</feature>
<feature type="disulfide bond" evidence="1">
    <location>
        <begin position="288"/>
        <end position="326"/>
    </location>
</feature>
<organism>
    <name type="scientific">Arabidopsis thaliana</name>
    <name type="common">Mouse-ear cress</name>
    <dbReference type="NCBI Taxonomy" id="3702"/>
    <lineage>
        <taxon>Eukaryota</taxon>
        <taxon>Viridiplantae</taxon>
        <taxon>Streptophyta</taxon>
        <taxon>Embryophyta</taxon>
        <taxon>Tracheophyta</taxon>
        <taxon>Spermatophyta</taxon>
        <taxon>Magnoliopsida</taxon>
        <taxon>eudicotyledons</taxon>
        <taxon>Gunneridae</taxon>
        <taxon>Pentapetalae</taxon>
        <taxon>rosids</taxon>
        <taxon>malvids</taxon>
        <taxon>Brassicales</taxon>
        <taxon>Brassicaceae</taxon>
        <taxon>Camelineae</taxon>
        <taxon>Arabidopsis</taxon>
    </lineage>
</organism>
<keyword id="KW-0121">Carboxypeptidase</keyword>
<keyword id="KW-1015">Disulfide bond</keyword>
<keyword id="KW-0325">Glycoprotein</keyword>
<keyword id="KW-0378">Hydrolase</keyword>
<keyword id="KW-0645">Protease</keyword>
<keyword id="KW-1185">Reference proteome</keyword>
<keyword id="KW-0964">Secreted</keyword>
<keyword id="KW-0732">Signal</keyword>
<accession>Q8L9Y0</accession>
<accession>Q9SGA9</accession>
<sequence length="473" mass="53401">MAMAKLAIFTTLMAILVMTSQGRIPTEGGEKEAEADRITSLPGQPNVTFEQFSGYVTVDKLSGRSLFYWLTEASDLPLSKPLVIWLNGGPGCSSVAYGASEEIGPFRISKGGSGLYLNKFAWNSISNLLFLEAPAGVGFSYTNRSSDLFNTGDRRTAKDSLQFLIQWLHRFPRYNHREIYITGESYAGHYVPQLAKEIMNYNKRSKNPLNLKGIMVGNAVTDNHYDNLGTVSYWWSHAMISDRTYHQLISTCDFSRQKESDECETLYSYAMEQEFGNIDQYNIYAPPCNKSSDGGGSYNGSSGRRSMRLPHLPHSVLRKISGYDPCTERYAEIYYNRPDVQKALHANTTKIPYKWTACSEVLNRNWNDTDSTVLPIYREMIAGGIRVWVFSGDVDSVVPVTATRYSLARLSLSTKLPWYPWYVKKQVGGWTEVYEGLTFVTVRGAGHEVPLFKPRAAFELFKYFLRGKPLPKA</sequence>
<proteinExistence type="evidence at transcript level"/>
<gene>
    <name type="primary">SCPL25</name>
    <name type="ordered locus">At3g02110</name>
    <name type="ORF">F1C9.10</name>
</gene>